<evidence type="ECO:0000255" key="1">
    <source>
        <dbReference type="HAMAP-Rule" id="MF_00107"/>
    </source>
</evidence>
<organism>
    <name type="scientific">Bacillus licheniformis (strain ATCC 14580 / DSM 13 / JCM 2505 / CCUG 7422 / NBRC 12200 / NCIMB 9375 / NCTC 10341 / NRRL NRS-1264 / Gibson 46)</name>
    <dbReference type="NCBI Taxonomy" id="279010"/>
    <lineage>
        <taxon>Bacteria</taxon>
        <taxon>Bacillati</taxon>
        <taxon>Bacillota</taxon>
        <taxon>Bacilli</taxon>
        <taxon>Bacillales</taxon>
        <taxon>Bacillaceae</taxon>
        <taxon>Bacillus</taxon>
    </lineage>
</organism>
<protein>
    <recommendedName>
        <fullName evidence="1">2-C-methyl-D-erythritol 2,4-cyclodiphosphate synthase</fullName>
        <shortName evidence="1">MECDP-synthase</shortName>
        <shortName evidence="1">MECPP-synthase</shortName>
        <shortName evidence="1">MECPS</shortName>
        <ecNumber evidence="1">4.6.1.12</ecNumber>
    </recommendedName>
</protein>
<name>ISPF_BACLD</name>
<gene>
    <name evidence="1" type="primary">ispF</name>
    <name type="ordered locus">BLi00109</name>
    <name type="ordered locus">BL03266</name>
</gene>
<comment type="function">
    <text evidence="1">Involved in the biosynthesis of isopentenyl diphosphate (IPP) and dimethylallyl diphosphate (DMAPP), two major building blocks of isoprenoid compounds. Catalyzes the conversion of 4-diphosphocytidyl-2-C-methyl-D-erythritol 2-phosphate (CDP-ME2P) to 2-C-methyl-D-erythritol 2,4-cyclodiphosphate (ME-CPP) with a corresponding release of cytidine 5-monophosphate (CMP).</text>
</comment>
<comment type="catalytic activity">
    <reaction evidence="1">
        <text>4-CDP-2-C-methyl-D-erythritol 2-phosphate = 2-C-methyl-D-erythritol 2,4-cyclic diphosphate + CMP</text>
        <dbReference type="Rhea" id="RHEA:23864"/>
        <dbReference type="ChEBI" id="CHEBI:57919"/>
        <dbReference type="ChEBI" id="CHEBI:58483"/>
        <dbReference type="ChEBI" id="CHEBI:60377"/>
        <dbReference type="EC" id="4.6.1.12"/>
    </reaction>
</comment>
<comment type="cofactor">
    <cofactor evidence="1">
        <name>a divalent metal cation</name>
        <dbReference type="ChEBI" id="CHEBI:60240"/>
    </cofactor>
    <text evidence="1">Binds 1 divalent metal cation per subunit.</text>
</comment>
<comment type="pathway">
    <text evidence="1">Isoprenoid biosynthesis; isopentenyl diphosphate biosynthesis via DXP pathway; isopentenyl diphosphate from 1-deoxy-D-xylulose 5-phosphate: step 4/6.</text>
</comment>
<comment type="subunit">
    <text evidence="1">Homotrimer.</text>
</comment>
<comment type="similarity">
    <text evidence="1">Belongs to the IspF family.</text>
</comment>
<reference key="1">
    <citation type="journal article" date="2004" name="J. Mol. Microbiol. Biotechnol.">
        <title>The complete genome sequence of Bacillus licheniformis DSM13, an organism with great industrial potential.</title>
        <authorList>
            <person name="Veith B."/>
            <person name="Herzberg C."/>
            <person name="Steckel S."/>
            <person name="Feesche J."/>
            <person name="Maurer K.H."/>
            <person name="Ehrenreich P."/>
            <person name="Baeumer S."/>
            <person name="Henne A."/>
            <person name="Liesegang H."/>
            <person name="Merkl R."/>
            <person name="Ehrenreich A."/>
            <person name="Gottschalk G."/>
        </authorList>
    </citation>
    <scope>NUCLEOTIDE SEQUENCE [LARGE SCALE GENOMIC DNA]</scope>
    <source>
        <strain>ATCC 14580 / DSM 13 / JCM 2505 / CCUG 7422 / NBRC 12200 / NCIMB 9375 / NCTC 10341 / NRRL NRS-1264 / Gibson 46</strain>
    </source>
</reference>
<reference key="2">
    <citation type="journal article" date="2004" name="Genome Biol.">
        <title>Complete genome sequence of the industrial bacterium Bacillus licheniformis and comparisons with closely related Bacillus species.</title>
        <authorList>
            <person name="Rey M.W."/>
            <person name="Ramaiya P."/>
            <person name="Nelson B.A."/>
            <person name="Brody-Karpin S.D."/>
            <person name="Zaretsky E.J."/>
            <person name="Tang M."/>
            <person name="Lopez de Leon A."/>
            <person name="Xiang H."/>
            <person name="Gusti V."/>
            <person name="Clausen I.G."/>
            <person name="Olsen P.B."/>
            <person name="Rasmussen M.D."/>
            <person name="Andersen J.T."/>
            <person name="Joergensen P.L."/>
            <person name="Larsen T.S."/>
            <person name="Sorokin A."/>
            <person name="Bolotin A."/>
            <person name="Lapidus A."/>
            <person name="Galleron N."/>
            <person name="Ehrlich S.D."/>
            <person name="Berka R.M."/>
        </authorList>
    </citation>
    <scope>NUCLEOTIDE SEQUENCE [LARGE SCALE GENOMIC DNA]</scope>
    <source>
        <strain>ATCC 14580 / DSM 13 / JCM 2505 / CCUG 7422 / NBRC 12200 / NCIMB 9375 / NCTC 10341 / NRRL NRS-1264 / Gibson 46</strain>
    </source>
</reference>
<sequence>MFRIGQGFDVHQLVEGRPLIIGGITIPYEKGLLGHSDADVLLHTIADACLGAVGEGDIGKHFPDTDPEFKDADSFKLLRHVWMIVKEKGYTLGNLDCTIIAQKPKMAPYIEDMRARIAEGLEAEISQINVKATTTEKLGFTGRAEGIAAQASVLLQKV</sequence>
<dbReference type="EC" id="4.6.1.12" evidence="1"/>
<dbReference type="EMBL" id="AE017333">
    <property type="protein sequence ID" value="AAU39083.1"/>
    <property type="molecule type" value="Genomic_DNA"/>
</dbReference>
<dbReference type="EMBL" id="CP000002">
    <property type="protein sequence ID" value="AAU21739.1"/>
    <property type="molecule type" value="Genomic_DNA"/>
</dbReference>
<dbReference type="RefSeq" id="WP_003178280.1">
    <property type="nucleotide sequence ID" value="NC_006322.1"/>
</dbReference>
<dbReference type="SMR" id="Q65PD1"/>
<dbReference type="STRING" id="279010.BL03266"/>
<dbReference type="GeneID" id="92858927"/>
<dbReference type="KEGG" id="bld:BLi00109"/>
<dbReference type="KEGG" id="bli:BL03266"/>
<dbReference type="eggNOG" id="COG0245">
    <property type="taxonomic scope" value="Bacteria"/>
</dbReference>
<dbReference type="HOGENOM" id="CLU_084630_2_0_9"/>
<dbReference type="UniPathway" id="UPA00056">
    <property type="reaction ID" value="UER00095"/>
</dbReference>
<dbReference type="Proteomes" id="UP000000606">
    <property type="component" value="Chromosome"/>
</dbReference>
<dbReference type="GO" id="GO:0008685">
    <property type="term" value="F:2-C-methyl-D-erythritol 2,4-cyclodiphosphate synthase activity"/>
    <property type="evidence" value="ECO:0007669"/>
    <property type="project" value="UniProtKB-UniRule"/>
</dbReference>
<dbReference type="GO" id="GO:0046872">
    <property type="term" value="F:metal ion binding"/>
    <property type="evidence" value="ECO:0007669"/>
    <property type="project" value="UniProtKB-KW"/>
</dbReference>
<dbReference type="GO" id="GO:0019288">
    <property type="term" value="P:isopentenyl diphosphate biosynthetic process, methylerythritol 4-phosphate pathway"/>
    <property type="evidence" value="ECO:0007669"/>
    <property type="project" value="UniProtKB-UniRule"/>
</dbReference>
<dbReference type="GO" id="GO:0016114">
    <property type="term" value="P:terpenoid biosynthetic process"/>
    <property type="evidence" value="ECO:0007669"/>
    <property type="project" value="InterPro"/>
</dbReference>
<dbReference type="CDD" id="cd00554">
    <property type="entry name" value="MECDP_synthase"/>
    <property type="match status" value="1"/>
</dbReference>
<dbReference type="FunFam" id="3.30.1330.50:FF:000001">
    <property type="entry name" value="2-C-methyl-D-erythritol 2,4-cyclodiphosphate synthase"/>
    <property type="match status" value="1"/>
</dbReference>
<dbReference type="Gene3D" id="3.30.1330.50">
    <property type="entry name" value="2-C-methyl-D-erythritol 2,4-cyclodiphosphate synthase"/>
    <property type="match status" value="1"/>
</dbReference>
<dbReference type="HAMAP" id="MF_00107">
    <property type="entry name" value="IspF"/>
    <property type="match status" value="1"/>
</dbReference>
<dbReference type="InterPro" id="IPR003526">
    <property type="entry name" value="MECDP_synthase"/>
</dbReference>
<dbReference type="InterPro" id="IPR020555">
    <property type="entry name" value="MECDP_synthase_CS"/>
</dbReference>
<dbReference type="InterPro" id="IPR036571">
    <property type="entry name" value="MECDP_synthase_sf"/>
</dbReference>
<dbReference type="NCBIfam" id="TIGR00151">
    <property type="entry name" value="ispF"/>
    <property type="match status" value="1"/>
</dbReference>
<dbReference type="PANTHER" id="PTHR43181">
    <property type="entry name" value="2-C-METHYL-D-ERYTHRITOL 2,4-CYCLODIPHOSPHATE SYNTHASE, CHLOROPLASTIC"/>
    <property type="match status" value="1"/>
</dbReference>
<dbReference type="PANTHER" id="PTHR43181:SF1">
    <property type="entry name" value="2-C-METHYL-D-ERYTHRITOL 2,4-CYCLODIPHOSPHATE SYNTHASE, CHLOROPLASTIC"/>
    <property type="match status" value="1"/>
</dbReference>
<dbReference type="Pfam" id="PF02542">
    <property type="entry name" value="YgbB"/>
    <property type="match status" value="1"/>
</dbReference>
<dbReference type="SUPFAM" id="SSF69765">
    <property type="entry name" value="IpsF-like"/>
    <property type="match status" value="1"/>
</dbReference>
<dbReference type="PROSITE" id="PS01350">
    <property type="entry name" value="ISPF"/>
    <property type="match status" value="1"/>
</dbReference>
<accession>Q65PD1</accession>
<accession>Q62ZR9</accession>
<feature type="chain" id="PRO_0000237706" description="2-C-methyl-D-erythritol 2,4-cyclodiphosphate synthase">
    <location>
        <begin position="1"/>
        <end position="158"/>
    </location>
</feature>
<feature type="binding site" evidence="1">
    <location>
        <begin position="9"/>
        <end position="11"/>
    </location>
    <ligand>
        <name>4-CDP-2-C-methyl-D-erythritol 2-phosphate</name>
        <dbReference type="ChEBI" id="CHEBI:57919"/>
    </ligand>
</feature>
<feature type="binding site" evidence="1">
    <location>
        <position position="9"/>
    </location>
    <ligand>
        <name>a divalent metal cation</name>
        <dbReference type="ChEBI" id="CHEBI:60240"/>
    </ligand>
</feature>
<feature type="binding site" evidence="1">
    <location>
        <position position="11"/>
    </location>
    <ligand>
        <name>a divalent metal cation</name>
        <dbReference type="ChEBI" id="CHEBI:60240"/>
    </ligand>
</feature>
<feature type="binding site" evidence="1">
    <location>
        <begin position="35"/>
        <end position="36"/>
    </location>
    <ligand>
        <name>4-CDP-2-C-methyl-D-erythritol 2-phosphate</name>
        <dbReference type="ChEBI" id="CHEBI:57919"/>
    </ligand>
</feature>
<feature type="binding site" evidence="1">
    <location>
        <position position="43"/>
    </location>
    <ligand>
        <name>a divalent metal cation</name>
        <dbReference type="ChEBI" id="CHEBI:60240"/>
    </ligand>
</feature>
<feature type="binding site" evidence="1">
    <location>
        <begin position="57"/>
        <end position="59"/>
    </location>
    <ligand>
        <name>4-CDP-2-C-methyl-D-erythritol 2-phosphate</name>
        <dbReference type="ChEBI" id="CHEBI:57919"/>
    </ligand>
</feature>
<feature type="binding site" evidence="1">
    <location>
        <begin position="62"/>
        <end position="66"/>
    </location>
    <ligand>
        <name>4-CDP-2-C-methyl-D-erythritol 2-phosphate</name>
        <dbReference type="ChEBI" id="CHEBI:57919"/>
    </ligand>
</feature>
<feature type="binding site" evidence="1">
    <location>
        <begin position="101"/>
        <end position="107"/>
    </location>
    <ligand>
        <name>4-CDP-2-C-methyl-D-erythritol 2-phosphate</name>
        <dbReference type="ChEBI" id="CHEBI:57919"/>
    </ligand>
</feature>
<feature type="binding site" evidence="1">
    <location>
        <begin position="133"/>
        <end position="136"/>
    </location>
    <ligand>
        <name>4-CDP-2-C-methyl-D-erythritol 2-phosphate</name>
        <dbReference type="ChEBI" id="CHEBI:57919"/>
    </ligand>
</feature>
<feature type="binding site" evidence="1">
    <location>
        <position position="140"/>
    </location>
    <ligand>
        <name>4-CDP-2-C-methyl-D-erythritol 2-phosphate</name>
        <dbReference type="ChEBI" id="CHEBI:57919"/>
    </ligand>
</feature>
<feature type="binding site" evidence="1">
    <location>
        <position position="143"/>
    </location>
    <ligand>
        <name>4-CDP-2-C-methyl-D-erythritol 2-phosphate</name>
        <dbReference type="ChEBI" id="CHEBI:57919"/>
    </ligand>
</feature>
<feature type="site" description="Transition state stabilizer" evidence="1">
    <location>
        <position position="35"/>
    </location>
</feature>
<feature type="site" description="Transition state stabilizer" evidence="1">
    <location>
        <position position="134"/>
    </location>
</feature>
<proteinExistence type="inferred from homology"/>
<keyword id="KW-0414">Isoprene biosynthesis</keyword>
<keyword id="KW-0456">Lyase</keyword>
<keyword id="KW-0479">Metal-binding</keyword>
<keyword id="KW-1185">Reference proteome</keyword>